<sequence length="413" mass="45751">YYTPEYKTKDTDILAAFRMTPQPGVPAEEAGAAVAAESSTGTWTTVWTDGLTSLDRYKGRCYDIEPVAGEENQYIAYVAYPLDLFEEGSVTNMLTSIVGNVFGFKALRALRLEDLRIPPAYSKTFMGPPHGIQVERDKLNKYGRPLLGCTIKPKLGLSAKNYGRAVYECLRGGLDFTKDDENVNSQPFMRWRDRFLFVAEALFKSQAETGEIKGHYLNATAGTCEEMMKRAVFARELGAPIVMHDYLTGGFTANTSLAFYCRDNGLLLHIHRAMHAVIDRQRNHGIHFRVLAKALRMSGGDHIHAGTVVGKLEGEREVTLGFVDLLRDDYIEKDRSRGIYFTQDWVSMPGVFPVASGGIHVWHMPALTEIFGDDSVLQFGGGTLGHPWGNAPGAVANRVALEACVQARNEGRD</sequence>
<protein>
    <recommendedName>
        <fullName>Ribulose bisphosphate carboxylase large chain</fullName>
        <shortName>RuBisCO large subunit</shortName>
        <ecNumber>4.1.1.39</ecNumber>
    </recommendedName>
</protein>
<comment type="function">
    <text evidence="1">RuBisCO catalyzes two reactions: the carboxylation of D-ribulose 1,5-bisphosphate, the primary event in carbon dioxide fixation, as well as the oxidative fragmentation of the pentose substrate in the photorespiration process. Both reactions occur simultaneously and in competition at the same active site (By similarity).</text>
</comment>
<comment type="catalytic activity">
    <reaction>
        <text>2 (2R)-3-phosphoglycerate + 2 H(+) = D-ribulose 1,5-bisphosphate + CO2 + H2O</text>
        <dbReference type="Rhea" id="RHEA:23124"/>
        <dbReference type="ChEBI" id="CHEBI:15377"/>
        <dbReference type="ChEBI" id="CHEBI:15378"/>
        <dbReference type="ChEBI" id="CHEBI:16526"/>
        <dbReference type="ChEBI" id="CHEBI:57870"/>
        <dbReference type="ChEBI" id="CHEBI:58272"/>
        <dbReference type="EC" id="4.1.1.39"/>
    </reaction>
</comment>
<comment type="catalytic activity">
    <reaction>
        <text>D-ribulose 1,5-bisphosphate + O2 = 2-phosphoglycolate + (2R)-3-phosphoglycerate + 2 H(+)</text>
        <dbReference type="Rhea" id="RHEA:36631"/>
        <dbReference type="ChEBI" id="CHEBI:15378"/>
        <dbReference type="ChEBI" id="CHEBI:15379"/>
        <dbReference type="ChEBI" id="CHEBI:57870"/>
        <dbReference type="ChEBI" id="CHEBI:58033"/>
        <dbReference type="ChEBI" id="CHEBI:58272"/>
    </reaction>
</comment>
<comment type="cofactor">
    <cofactor evidence="1">
        <name>Mg(2+)</name>
        <dbReference type="ChEBI" id="CHEBI:18420"/>
    </cofactor>
    <text evidence="1">Binds 1 Mg(2+) ion per subunit.</text>
</comment>
<comment type="subunit">
    <text evidence="1">Heterohexadecamer of 8 large chains and 8 small chains; disulfide-linked. The disulfide link is formed within the large subunit homodimers (By similarity).</text>
</comment>
<comment type="subcellular location">
    <subcellularLocation>
        <location>Plastid</location>
        <location>Chloroplast</location>
    </subcellularLocation>
</comment>
<comment type="PTM">
    <text evidence="1">The disulfide bond which can form in the large chain dimeric partners within the hexadecamer appears to be associated with oxidative stress and protein turnover.</text>
</comment>
<comment type="miscellaneous">
    <text evidence="1">The basic functional RuBisCO is composed of a large chain homodimer in a 'head-to-tail' conformation. In form I RuBisCO this homodimer is arranged in a barrel-like tetramer with the small subunits forming a tetrameric 'cap' on each end of the 'barrel' (By similarity).</text>
</comment>
<comment type="similarity">
    <text evidence="3">Belongs to the RuBisCO large chain family. Type I subfamily.</text>
</comment>
<proteinExistence type="inferred from homology"/>
<reference key="1">
    <citation type="journal article" date="1994" name="Proc. Natl. Acad. Sci. U.S.A.">
        <title>rbcL gene sequences provide evidence for the evolutionary lineages of leptosporangiate ferns.</title>
        <authorList>
            <person name="Hasebe M."/>
            <person name="Omori T."/>
            <person name="Nakazawa M."/>
            <person name="Sano T."/>
            <person name="Kato M."/>
            <person name="Iwatsuki K."/>
        </authorList>
    </citation>
    <scope>NUCLEOTIDE SEQUENCE [GENOMIC DNA]</scope>
    <source>
        <tissue>Leaf</tissue>
    </source>
</reference>
<geneLocation type="chloroplast"/>
<accession>P43223</accession>
<keyword id="KW-0113">Calvin cycle</keyword>
<keyword id="KW-0120">Carbon dioxide fixation</keyword>
<keyword id="KW-0150">Chloroplast</keyword>
<keyword id="KW-1015">Disulfide bond</keyword>
<keyword id="KW-0456">Lyase</keyword>
<keyword id="KW-0460">Magnesium</keyword>
<keyword id="KW-0479">Metal-binding</keyword>
<keyword id="KW-0503">Monooxygenase</keyword>
<keyword id="KW-0560">Oxidoreductase</keyword>
<keyword id="KW-0601">Photorespiration</keyword>
<keyword id="KW-0602">Photosynthesis</keyword>
<keyword id="KW-0934">Plastid</keyword>
<organism>
    <name type="scientific">Adiantum pedatum</name>
    <name type="common">Northern maidenhair fern</name>
    <dbReference type="NCBI Taxonomy" id="29590"/>
    <lineage>
        <taxon>Eukaryota</taxon>
        <taxon>Viridiplantae</taxon>
        <taxon>Streptophyta</taxon>
        <taxon>Embryophyta</taxon>
        <taxon>Tracheophyta</taxon>
        <taxon>Polypodiopsida</taxon>
        <taxon>Polypodiidae</taxon>
        <taxon>Polypodiales</taxon>
        <taxon>Pteridineae</taxon>
        <taxon>Pteridaceae</taxon>
        <taxon>Vittarioideae</taxon>
        <taxon>Adiantum</taxon>
    </lineage>
</organism>
<evidence type="ECO:0000250" key="1"/>
<evidence type="ECO:0000255" key="2">
    <source>
        <dbReference type="PROSITE-ProRule" id="PRU10114"/>
    </source>
</evidence>
<evidence type="ECO:0000305" key="3"/>
<feature type="chain" id="PRO_0000062341" description="Ribulose bisphosphate carboxylase large chain">
    <location>
        <begin position="1" status="less than"/>
        <end position="413" status="greater than"/>
    </location>
</feature>
<feature type="active site" description="Proton acceptor" evidence="1">
    <location>
        <position position="152"/>
    </location>
</feature>
<feature type="active site" description="Proton acceptor" evidence="1">
    <location>
        <position position="271"/>
    </location>
</feature>
<feature type="binding site" description="in homodimeric partner" evidence="1">
    <location>
        <position position="100"/>
    </location>
    <ligand>
        <name>substrate</name>
    </ligand>
</feature>
<feature type="binding site" evidence="1">
    <location>
        <position position="150"/>
    </location>
    <ligand>
        <name>substrate</name>
    </ligand>
</feature>
<feature type="binding site" evidence="1">
    <location>
        <position position="154"/>
    </location>
    <ligand>
        <name>substrate</name>
    </ligand>
</feature>
<feature type="binding site" description="via carbamate group" evidence="2">
    <location>
        <position position="178"/>
    </location>
    <ligand>
        <name>Mg(2+)</name>
        <dbReference type="ChEBI" id="CHEBI:18420"/>
    </ligand>
</feature>
<feature type="binding site" evidence="2">
    <location>
        <position position="180"/>
    </location>
    <ligand>
        <name>Mg(2+)</name>
        <dbReference type="ChEBI" id="CHEBI:18420"/>
    </ligand>
</feature>
<feature type="binding site" evidence="2">
    <location>
        <position position="181"/>
    </location>
    <ligand>
        <name>Mg(2+)</name>
        <dbReference type="ChEBI" id="CHEBI:18420"/>
    </ligand>
</feature>
<feature type="binding site" evidence="1">
    <location>
        <position position="272"/>
    </location>
    <ligand>
        <name>substrate</name>
    </ligand>
</feature>
<feature type="binding site" evidence="1">
    <location>
        <position position="304"/>
    </location>
    <ligand>
        <name>substrate</name>
    </ligand>
</feature>
<feature type="binding site" evidence="1">
    <location>
        <position position="356"/>
    </location>
    <ligand>
        <name>substrate</name>
    </ligand>
</feature>
<feature type="site" description="Transition state stabilizer" evidence="1">
    <location>
        <position position="311"/>
    </location>
</feature>
<feature type="modified residue" description="N6-carboxylysine" evidence="2">
    <location>
        <position position="178"/>
    </location>
</feature>
<feature type="disulfide bond" description="Interchain; in linked form" evidence="1">
    <location>
        <position position="224"/>
    </location>
</feature>
<feature type="non-terminal residue">
    <location>
        <position position="1"/>
    </location>
</feature>
<feature type="non-terminal residue">
    <location>
        <position position="413"/>
    </location>
</feature>
<gene>
    <name type="primary">rbcL</name>
</gene>
<name>RBL_ADIPE</name>
<dbReference type="EC" id="4.1.1.39"/>
<dbReference type="EMBL" id="U05602">
    <property type="protein sequence ID" value="AAA19886.1"/>
    <property type="molecule type" value="Genomic_DNA"/>
</dbReference>
<dbReference type="SMR" id="P43223"/>
<dbReference type="GO" id="GO:0009507">
    <property type="term" value="C:chloroplast"/>
    <property type="evidence" value="ECO:0007669"/>
    <property type="project" value="UniProtKB-SubCell"/>
</dbReference>
<dbReference type="GO" id="GO:0000287">
    <property type="term" value="F:magnesium ion binding"/>
    <property type="evidence" value="ECO:0007669"/>
    <property type="project" value="InterPro"/>
</dbReference>
<dbReference type="GO" id="GO:0004497">
    <property type="term" value="F:monooxygenase activity"/>
    <property type="evidence" value="ECO:0007669"/>
    <property type="project" value="UniProtKB-KW"/>
</dbReference>
<dbReference type="GO" id="GO:0016984">
    <property type="term" value="F:ribulose-bisphosphate carboxylase activity"/>
    <property type="evidence" value="ECO:0007669"/>
    <property type="project" value="UniProtKB-EC"/>
</dbReference>
<dbReference type="GO" id="GO:0009853">
    <property type="term" value="P:photorespiration"/>
    <property type="evidence" value="ECO:0007669"/>
    <property type="project" value="UniProtKB-KW"/>
</dbReference>
<dbReference type="GO" id="GO:0019253">
    <property type="term" value="P:reductive pentose-phosphate cycle"/>
    <property type="evidence" value="ECO:0007669"/>
    <property type="project" value="UniProtKB-KW"/>
</dbReference>
<dbReference type="FunFam" id="3.20.20.110:FF:000003">
    <property type="entry name" value="Ribulose bisphosphate carboxylase large chain"/>
    <property type="match status" value="1"/>
</dbReference>
<dbReference type="Gene3D" id="3.20.20.110">
    <property type="entry name" value="Ribulose bisphosphate carboxylase, large subunit, C-terminal domain"/>
    <property type="match status" value="1"/>
</dbReference>
<dbReference type="Gene3D" id="3.30.70.150">
    <property type="entry name" value="RuBisCO large subunit, N-terminal domain"/>
    <property type="match status" value="1"/>
</dbReference>
<dbReference type="InterPro" id="IPR033966">
    <property type="entry name" value="RuBisCO"/>
</dbReference>
<dbReference type="InterPro" id="IPR020878">
    <property type="entry name" value="RuBisCo_large_chain_AS"/>
</dbReference>
<dbReference type="InterPro" id="IPR000685">
    <property type="entry name" value="RuBisCO_lsu_C"/>
</dbReference>
<dbReference type="InterPro" id="IPR036376">
    <property type="entry name" value="RuBisCO_lsu_C_sf"/>
</dbReference>
<dbReference type="InterPro" id="IPR017443">
    <property type="entry name" value="RuBisCO_lsu_fd_N"/>
</dbReference>
<dbReference type="InterPro" id="IPR036422">
    <property type="entry name" value="RuBisCO_lsu_N_sf"/>
</dbReference>
<dbReference type="NCBIfam" id="NF003252">
    <property type="entry name" value="PRK04208.1"/>
    <property type="match status" value="1"/>
</dbReference>
<dbReference type="PANTHER" id="PTHR42704">
    <property type="entry name" value="RIBULOSE BISPHOSPHATE CARBOXYLASE"/>
    <property type="match status" value="1"/>
</dbReference>
<dbReference type="PANTHER" id="PTHR42704:SF17">
    <property type="entry name" value="RIBULOSE BISPHOSPHATE CARBOXYLASE LARGE CHAIN"/>
    <property type="match status" value="1"/>
</dbReference>
<dbReference type="Pfam" id="PF00016">
    <property type="entry name" value="RuBisCO_large"/>
    <property type="match status" value="1"/>
</dbReference>
<dbReference type="Pfam" id="PF02788">
    <property type="entry name" value="RuBisCO_large_N"/>
    <property type="match status" value="1"/>
</dbReference>
<dbReference type="SFLD" id="SFLDG01052">
    <property type="entry name" value="RuBisCO"/>
    <property type="match status" value="1"/>
</dbReference>
<dbReference type="SFLD" id="SFLDS00014">
    <property type="entry name" value="RuBisCO"/>
    <property type="match status" value="1"/>
</dbReference>
<dbReference type="SFLD" id="SFLDG00301">
    <property type="entry name" value="RuBisCO-like_proteins"/>
    <property type="match status" value="1"/>
</dbReference>
<dbReference type="SUPFAM" id="SSF51649">
    <property type="entry name" value="RuBisCo, C-terminal domain"/>
    <property type="match status" value="1"/>
</dbReference>
<dbReference type="SUPFAM" id="SSF54966">
    <property type="entry name" value="RuBisCO, large subunit, small (N-terminal) domain"/>
    <property type="match status" value="1"/>
</dbReference>
<dbReference type="PROSITE" id="PS00157">
    <property type="entry name" value="RUBISCO_LARGE"/>
    <property type="match status" value="1"/>
</dbReference>